<dbReference type="EMBL" id="AE005674">
    <property type="protein sequence ID" value="AAN44075.1"/>
    <property type="molecule type" value="Genomic_DNA"/>
</dbReference>
<dbReference type="EMBL" id="AE014073">
    <property type="protein sequence ID" value="AAP17900.1"/>
    <property type="molecule type" value="Genomic_DNA"/>
</dbReference>
<dbReference type="RefSeq" id="NP_708368.1">
    <property type="nucleotide sequence ID" value="NC_004337.2"/>
</dbReference>
<dbReference type="RefSeq" id="WP_000331707.1">
    <property type="nucleotide sequence ID" value="NZ_WPGW01000021.1"/>
</dbReference>
<dbReference type="BMRB" id="P0ACD7"/>
<dbReference type="SMR" id="P0ACD7"/>
<dbReference type="STRING" id="198214.SF2576"/>
<dbReference type="PaxDb" id="198214-SF2576"/>
<dbReference type="GeneID" id="1026942"/>
<dbReference type="GeneID" id="93774607"/>
<dbReference type="KEGG" id="sfl:SF2576"/>
<dbReference type="KEGG" id="sfx:S2748"/>
<dbReference type="PATRIC" id="fig|198214.7.peg.3076"/>
<dbReference type="HOGENOM" id="CLU_079283_5_0_6"/>
<dbReference type="Proteomes" id="UP000001006">
    <property type="component" value="Chromosome"/>
</dbReference>
<dbReference type="Proteomes" id="UP000002673">
    <property type="component" value="Chromosome"/>
</dbReference>
<dbReference type="GO" id="GO:0005737">
    <property type="term" value="C:cytoplasm"/>
    <property type="evidence" value="ECO:0007669"/>
    <property type="project" value="UniProtKB-ARBA"/>
</dbReference>
<dbReference type="GO" id="GO:0005506">
    <property type="term" value="F:iron ion binding"/>
    <property type="evidence" value="ECO:0007669"/>
    <property type="project" value="InterPro"/>
</dbReference>
<dbReference type="GO" id="GO:0051536">
    <property type="term" value="F:iron-sulfur cluster binding"/>
    <property type="evidence" value="ECO:0007669"/>
    <property type="project" value="InterPro"/>
</dbReference>
<dbReference type="GO" id="GO:0016226">
    <property type="term" value="P:iron-sulfur cluster assembly"/>
    <property type="evidence" value="ECO:0007669"/>
    <property type="project" value="InterPro"/>
</dbReference>
<dbReference type="CDD" id="cd06664">
    <property type="entry name" value="IscU_like"/>
    <property type="match status" value="1"/>
</dbReference>
<dbReference type="FunFam" id="3.90.1010.10:FF:000001">
    <property type="entry name" value="Iron-sulfur cluster assembly scaffold protein IscU"/>
    <property type="match status" value="1"/>
</dbReference>
<dbReference type="Gene3D" id="3.90.1010.10">
    <property type="match status" value="1"/>
</dbReference>
<dbReference type="InterPro" id="IPR011339">
    <property type="entry name" value="ISCU"/>
</dbReference>
<dbReference type="InterPro" id="IPR002871">
    <property type="entry name" value="NIF_FeS_clus_asmbl_NifU_N"/>
</dbReference>
<dbReference type="NCBIfam" id="TIGR01999">
    <property type="entry name" value="iscU"/>
    <property type="match status" value="1"/>
</dbReference>
<dbReference type="PANTHER" id="PTHR10093">
    <property type="entry name" value="IRON-SULFUR CLUSTER ASSEMBLY ENZYME NIFU HOMOLOG"/>
    <property type="match status" value="1"/>
</dbReference>
<dbReference type="Pfam" id="PF01592">
    <property type="entry name" value="NifU_N"/>
    <property type="match status" value="1"/>
</dbReference>
<dbReference type="SUPFAM" id="SSF82649">
    <property type="entry name" value="SufE/NifU"/>
    <property type="match status" value="1"/>
</dbReference>
<feature type="chain" id="PRO_0000166189" description="Iron-sulfur cluster assembly scaffold protein IscU">
    <location>
        <begin position="1"/>
        <end position="128"/>
    </location>
</feature>
<name>ISCU_SHIFL</name>
<evidence type="ECO:0000250" key="1"/>
<evidence type="ECO:0000305" key="2"/>
<reference key="1">
    <citation type="journal article" date="2002" name="Nucleic Acids Res.">
        <title>Genome sequence of Shigella flexneri 2a: insights into pathogenicity through comparison with genomes of Escherichia coli K12 and O157.</title>
        <authorList>
            <person name="Jin Q."/>
            <person name="Yuan Z."/>
            <person name="Xu J."/>
            <person name="Wang Y."/>
            <person name="Shen Y."/>
            <person name="Lu W."/>
            <person name="Wang J."/>
            <person name="Liu H."/>
            <person name="Yang J."/>
            <person name="Yang F."/>
            <person name="Zhang X."/>
            <person name="Zhang J."/>
            <person name="Yang G."/>
            <person name="Wu H."/>
            <person name="Qu D."/>
            <person name="Dong J."/>
            <person name="Sun L."/>
            <person name="Xue Y."/>
            <person name="Zhao A."/>
            <person name="Gao Y."/>
            <person name="Zhu J."/>
            <person name="Kan B."/>
            <person name="Ding K."/>
            <person name="Chen S."/>
            <person name="Cheng H."/>
            <person name="Yao Z."/>
            <person name="He B."/>
            <person name="Chen R."/>
            <person name="Ma D."/>
            <person name="Qiang B."/>
            <person name="Wen Y."/>
            <person name="Hou Y."/>
            <person name="Yu J."/>
        </authorList>
    </citation>
    <scope>NUCLEOTIDE SEQUENCE [LARGE SCALE GENOMIC DNA]</scope>
    <source>
        <strain>301 / Serotype 2a</strain>
    </source>
</reference>
<reference key="2">
    <citation type="journal article" date="2003" name="Infect. Immun.">
        <title>Complete genome sequence and comparative genomics of Shigella flexneri serotype 2a strain 2457T.</title>
        <authorList>
            <person name="Wei J."/>
            <person name="Goldberg M.B."/>
            <person name="Burland V."/>
            <person name="Venkatesan M.M."/>
            <person name="Deng W."/>
            <person name="Fournier G."/>
            <person name="Mayhew G.F."/>
            <person name="Plunkett G. III"/>
            <person name="Rose D.J."/>
            <person name="Darling A."/>
            <person name="Mau B."/>
            <person name="Perna N.T."/>
            <person name="Payne S.M."/>
            <person name="Runyen-Janecky L.J."/>
            <person name="Zhou S."/>
            <person name="Schwartz D.C."/>
            <person name="Blattner F.R."/>
        </authorList>
    </citation>
    <scope>NUCLEOTIDE SEQUENCE [LARGE SCALE GENOMIC DNA]</scope>
    <source>
        <strain>ATCC 700930 / 2457T / Serotype 2a</strain>
    </source>
</reference>
<keyword id="KW-1185">Reference proteome</keyword>
<comment type="function">
    <text evidence="1">A scaffold on which IscS assembles Fe-S clusters. Subsequently gives the nascent cluster to other proteins. It is likely that Fe-S cluster coordination is flexible as the role of this complex is to build and then hand off Fe-S clusters (By similarity).</text>
</comment>
<comment type="subunit">
    <text evidence="1">Forms a heterotetramer with IscS; each subunit of the IscS dimer contacts an IscU monomer.</text>
</comment>
<comment type="similarity">
    <text evidence="2">Belongs to the NifU family.</text>
</comment>
<gene>
    <name type="primary">iscU</name>
    <name type="synonym">nifU</name>
    <name type="ordered locus">SF2576</name>
    <name type="ordered locus">S2748</name>
</gene>
<accession>P0ACD7</accession>
<accession>P77310</accession>
<sequence length="128" mass="13849">MAYSEKVIDHYENPRNVGSFDNNDENVGSGMVGAPACGDVMKLQIKVNDEGIIEDARFKTYGCGSAIASSSLVTEWVKGKSLDEAQAIKNTDIAEELELPPVKIHCSILAEDAIKAAIADYKSKREAK</sequence>
<protein>
    <recommendedName>
        <fullName>Iron-sulfur cluster assembly scaffold protein IscU</fullName>
    </recommendedName>
    <alternativeName>
        <fullName>Sulfur acceptor protein IscU</fullName>
    </alternativeName>
</protein>
<organism>
    <name type="scientific">Shigella flexneri</name>
    <dbReference type="NCBI Taxonomy" id="623"/>
    <lineage>
        <taxon>Bacteria</taxon>
        <taxon>Pseudomonadati</taxon>
        <taxon>Pseudomonadota</taxon>
        <taxon>Gammaproteobacteria</taxon>
        <taxon>Enterobacterales</taxon>
        <taxon>Enterobacteriaceae</taxon>
        <taxon>Shigella</taxon>
    </lineage>
</organism>
<proteinExistence type="inferred from homology"/>